<reference key="1">
    <citation type="journal article" date="1995" name="FEBS Lett.">
        <title>VIP17/MAL, a proteolipid in apical transport vesicles.</title>
        <authorList>
            <person name="Zacchetti D."/>
            <person name="Peraenen J."/>
            <person name="Murata M."/>
            <person name="Fiedler K."/>
            <person name="Simons K."/>
        </authorList>
    </citation>
    <scope>NUCLEOTIDE SEQUENCE [MRNA]</scope>
    <source>
        <strain>Cocker spaniel</strain>
        <tissue>Kidney</tissue>
    </source>
</reference>
<comment type="function">
    <text>Could be an important component in vesicular trafficking cycling between the Golgi complex and the apical plasma membrane. Could be involved in myelin biogenesis and/or myelin function.</text>
</comment>
<comment type="subcellular location">
    <subcellularLocation>
        <location>Membrane</location>
        <topology>Multi-pass membrane protein</topology>
    </subcellularLocation>
</comment>
<comment type="PTM">
    <text>Lipoprotein.</text>
</comment>
<comment type="similarity">
    <text evidence="3">Belongs to the MAL family.</text>
</comment>
<proteinExistence type="evidence at transcript level"/>
<keyword id="KW-0449">Lipoprotein</keyword>
<keyword id="KW-0472">Membrane</keyword>
<keyword id="KW-1185">Reference proteome</keyword>
<keyword id="KW-0812">Transmembrane</keyword>
<keyword id="KW-1133">Transmembrane helix</keyword>
<protein>
    <recommendedName>
        <fullName>Myelin and lymphocyte protein</fullName>
    </recommendedName>
    <alternativeName>
        <fullName>T-lymphocyte maturation-associated protein</fullName>
    </alternativeName>
    <alternativeName>
        <fullName>VIP17 proteolipid</fullName>
    </alternativeName>
</protein>
<accession>Q28296</accession>
<name>MAL_CANLF</name>
<feature type="chain" id="PRO_0000156804" description="Myelin and lymphocyte protein">
    <location>
        <begin position="1"/>
        <end position="153"/>
    </location>
</feature>
<feature type="topological domain" description="Cytoplasmic" evidence="1">
    <location>
        <begin position="1"/>
        <end position="24"/>
    </location>
</feature>
<feature type="transmembrane region" description="Helical" evidence="1">
    <location>
        <begin position="25"/>
        <end position="46"/>
    </location>
</feature>
<feature type="topological domain" description="Extracellular" evidence="1">
    <location>
        <begin position="47"/>
        <end position="53"/>
    </location>
</feature>
<feature type="transmembrane region" description="Helical" evidence="1">
    <location>
        <begin position="54"/>
        <end position="75"/>
    </location>
</feature>
<feature type="topological domain" description="Cytoplasmic" evidence="1">
    <location>
        <begin position="76"/>
        <end position="92"/>
    </location>
</feature>
<feature type="transmembrane region" description="Helical" evidence="1">
    <location>
        <begin position="93"/>
        <end position="114"/>
    </location>
</feature>
<feature type="topological domain" description="Extracellular" evidence="1">
    <location>
        <begin position="115"/>
        <end position="125"/>
    </location>
</feature>
<feature type="transmembrane region" description="Helical" evidence="1">
    <location>
        <begin position="126"/>
        <end position="147"/>
    </location>
</feature>
<feature type="topological domain" description="Cytoplasmic" evidence="1">
    <location>
        <begin position="148"/>
        <end position="153"/>
    </location>
</feature>
<feature type="domain" description="MARVEL" evidence="2">
    <location>
        <begin position="18"/>
        <end position="151"/>
    </location>
</feature>
<sequence>MAPAAASGGSSLPSGFSVFTTFPDLLFIFEFIFGGLVWILIASSLVPIPLVQGWVMFVSVFCFMATTALLVLYIIGAHGGENSWVTLDAAYHCIAALFYLSASVLEALATIGMQEGYTYKQYHENISAVVFSYVATLLYVVHAVFSLIRWKSS</sequence>
<gene>
    <name type="primary">MAL</name>
</gene>
<evidence type="ECO:0000255" key="1"/>
<evidence type="ECO:0000255" key="2">
    <source>
        <dbReference type="PROSITE-ProRule" id="PRU00581"/>
    </source>
</evidence>
<evidence type="ECO:0000305" key="3"/>
<dbReference type="EMBL" id="X92505">
    <property type="protein sequence ID" value="CAA63261.1"/>
    <property type="molecule type" value="mRNA"/>
</dbReference>
<dbReference type="PIR" id="S68406">
    <property type="entry name" value="S68406"/>
</dbReference>
<dbReference type="RefSeq" id="NP_001003253.1">
    <property type="nucleotide sequence ID" value="NM_001003253.1"/>
</dbReference>
<dbReference type="SMR" id="Q28296"/>
<dbReference type="FunCoup" id="Q28296">
    <property type="interactions" value="29"/>
</dbReference>
<dbReference type="STRING" id="9615.ENSCAFP00000050507"/>
<dbReference type="TCDB" id="1.A.64.2.1">
    <property type="family name" value="the plasmolipin (plasmolipin) family"/>
</dbReference>
<dbReference type="PaxDb" id="9612-ENSCAFP00000010473"/>
<dbReference type="GeneID" id="403933"/>
<dbReference type="KEGG" id="cfa:403933"/>
<dbReference type="CTD" id="4118"/>
<dbReference type="eggNOG" id="KOG4788">
    <property type="taxonomic scope" value="Eukaryota"/>
</dbReference>
<dbReference type="InParanoid" id="Q28296"/>
<dbReference type="OrthoDB" id="9940869at2759"/>
<dbReference type="Proteomes" id="UP000002254">
    <property type="component" value="Unplaced"/>
</dbReference>
<dbReference type="Proteomes" id="UP000694429">
    <property type="component" value="Unplaced"/>
</dbReference>
<dbReference type="Proteomes" id="UP000694542">
    <property type="component" value="Unplaced"/>
</dbReference>
<dbReference type="Proteomes" id="UP000805418">
    <property type="component" value="Unplaced"/>
</dbReference>
<dbReference type="GO" id="GO:0016020">
    <property type="term" value="C:membrane"/>
    <property type="evidence" value="ECO:0000318"/>
    <property type="project" value="GO_Central"/>
</dbReference>
<dbReference type="GO" id="GO:0045121">
    <property type="term" value="C:membrane raft"/>
    <property type="evidence" value="ECO:0000314"/>
    <property type="project" value="UniProtKB"/>
</dbReference>
<dbReference type="GO" id="GO:0019911">
    <property type="term" value="F:structural constituent of myelin sheath"/>
    <property type="evidence" value="ECO:0000318"/>
    <property type="project" value="GO_Central"/>
</dbReference>
<dbReference type="GO" id="GO:0042552">
    <property type="term" value="P:myelination"/>
    <property type="evidence" value="ECO:0000318"/>
    <property type="project" value="GO_Central"/>
</dbReference>
<dbReference type="InterPro" id="IPR013295">
    <property type="entry name" value="MAL"/>
</dbReference>
<dbReference type="InterPro" id="IPR008253">
    <property type="entry name" value="Marvel"/>
</dbReference>
<dbReference type="InterPro" id="IPR050578">
    <property type="entry name" value="MARVEL-CKLF_proteins"/>
</dbReference>
<dbReference type="PANTHER" id="PTHR22776">
    <property type="entry name" value="MARVEL-CONTAINING POTENTIAL LIPID RAFT-ASSOCIATED PROTEIN"/>
    <property type="match status" value="1"/>
</dbReference>
<dbReference type="PANTHER" id="PTHR22776:SF12">
    <property type="entry name" value="MYELIN AND LYMPHOCYTE PROTEIN"/>
    <property type="match status" value="1"/>
</dbReference>
<dbReference type="Pfam" id="PF01284">
    <property type="entry name" value="MARVEL"/>
    <property type="match status" value="1"/>
</dbReference>
<dbReference type="PRINTS" id="PR01884">
    <property type="entry name" value="MALPROTEIN"/>
</dbReference>
<dbReference type="PROSITE" id="PS51225">
    <property type="entry name" value="MARVEL"/>
    <property type="match status" value="1"/>
</dbReference>
<organism>
    <name type="scientific">Canis lupus familiaris</name>
    <name type="common">Dog</name>
    <name type="synonym">Canis familiaris</name>
    <dbReference type="NCBI Taxonomy" id="9615"/>
    <lineage>
        <taxon>Eukaryota</taxon>
        <taxon>Metazoa</taxon>
        <taxon>Chordata</taxon>
        <taxon>Craniata</taxon>
        <taxon>Vertebrata</taxon>
        <taxon>Euteleostomi</taxon>
        <taxon>Mammalia</taxon>
        <taxon>Eutheria</taxon>
        <taxon>Laurasiatheria</taxon>
        <taxon>Carnivora</taxon>
        <taxon>Caniformia</taxon>
        <taxon>Canidae</taxon>
        <taxon>Canis</taxon>
    </lineage>
</organism>